<evidence type="ECO:0000255" key="1">
    <source>
        <dbReference type="HAMAP-Rule" id="MF_00014"/>
    </source>
</evidence>
<name>RIMM_PSYCK</name>
<protein>
    <recommendedName>
        <fullName evidence="1">Ribosome maturation factor RimM</fullName>
    </recommendedName>
</protein>
<reference key="1">
    <citation type="submission" date="2006-03" db="EMBL/GenBank/DDBJ databases">
        <title>Complete sequence of chromosome of Psychrobacter cryohalolentis K5.</title>
        <authorList>
            <consortium name="US DOE Joint Genome Institute"/>
            <person name="Copeland A."/>
            <person name="Lucas S."/>
            <person name="Lapidus A."/>
            <person name="Barry K."/>
            <person name="Detter J.C."/>
            <person name="Glavina T."/>
            <person name="Hammon N."/>
            <person name="Israni S."/>
            <person name="Dalin E."/>
            <person name="Tice H."/>
            <person name="Pitluck S."/>
            <person name="Brettin T."/>
            <person name="Bruce D."/>
            <person name="Han C."/>
            <person name="Tapia R."/>
            <person name="Sims D.R."/>
            <person name="Gilna P."/>
            <person name="Schmutz J."/>
            <person name="Larimer F."/>
            <person name="Land M."/>
            <person name="Hauser L."/>
            <person name="Kyrpides N."/>
            <person name="Kim E."/>
            <person name="Richardson P."/>
        </authorList>
    </citation>
    <scope>NUCLEOTIDE SEQUENCE [LARGE SCALE GENOMIC DNA]</scope>
    <source>
        <strain>ATCC BAA-1226 / DSM 17306 / VKM B-2378 / K5</strain>
    </source>
</reference>
<comment type="function">
    <text evidence="1">An accessory protein needed during the final step in the assembly of 30S ribosomal subunit, possibly for assembly of the head region. Essential for efficient processing of 16S rRNA. May be needed both before and after RbfA during the maturation of 16S rRNA. It has affinity for free ribosomal 30S subunits but not for 70S ribosomes.</text>
</comment>
<comment type="subunit">
    <text evidence="1">Binds ribosomal protein uS19.</text>
</comment>
<comment type="subcellular location">
    <subcellularLocation>
        <location evidence="1">Cytoplasm</location>
    </subcellularLocation>
</comment>
<comment type="domain">
    <text evidence="1">The PRC barrel domain binds ribosomal protein uS19.</text>
</comment>
<comment type="similarity">
    <text evidence="1">Belongs to the RimM family.</text>
</comment>
<accession>Q1Q8A5</accession>
<dbReference type="EMBL" id="CP000323">
    <property type="protein sequence ID" value="ABE76098.1"/>
    <property type="molecule type" value="Genomic_DNA"/>
</dbReference>
<dbReference type="RefSeq" id="WP_011514628.1">
    <property type="nucleotide sequence ID" value="NC_007969.1"/>
</dbReference>
<dbReference type="SMR" id="Q1Q8A5"/>
<dbReference type="STRING" id="335284.Pcryo_2321"/>
<dbReference type="KEGG" id="pcr:Pcryo_2321"/>
<dbReference type="eggNOG" id="COG0806">
    <property type="taxonomic scope" value="Bacteria"/>
</dbReference>
<dbReference type="HOGENOM" id="CLU_077636_1_0_6"/>
<dbReference type="Proteomes" id="UP000002425">
    <property type="component" value="Chromosome"/>
</dbReference>
<dbReference type="GO" id="GO:0005737">
    <property type="term" value="C:cytoplasm"/>
    <property type="evidence" value="ECO:0007669"/>
    <property type="project" value="UniProtKB-SubCell"/>
</dbReference>
<dbReference type="GO" id="GO:0005840">
    <property type="term" value="C:ribosome"/>
    <property type="evidence" value="ECO:0007669"/>
    <property type="project" value="InterPro"/>
</dbReference>
<dbReference type="GO" id="GO:0043022">
    <property type="term" value="F:ribosome binding"/>
    <property type="evidence" value="ECO:0007669"/>
    <property type="project" value="InterPro"/>
</dbReference>
<dbReference type="GO" id="GO:0042274">
    <property type="term" value="P:ribosomal small subunit biogenesis"/>
    <property type="evidence" value="ECO:0007669"/>
    <property type="project" value="UniProtKB-UniRule"/>
</dbReference>
<dbReference type="GO" id="GO:0006364">
    <property type="term" value="P:rRNA processing"/>
    <property type="evidence" value="ECO:0007669"/>
    <property type="project" value="UniProtKB-UniRule"/>
</dbReference>
<dbReference type="Gene3D" id="2.30.30.240">
    <property type="entry name" value="PRC-barrel domain"/>
    <property type="match status" value="1"/>
</dbReference>
<dbReference type="Gene3D" id="2.40.30.60">
    <property type="entry name" value="RimM"/>
    <property type="match status" value="1"/>
</dbReference>
<dbReference type="HAMAP" id="MF_00014">
    <property type="entry name" value="Ribosome_mat_RimM"/>
    <property type="match status" value="1"/>
</dbReference>
<dbReference type="InterPro" id="IPR011033">
    <property type="entry name" value="PRC_barrel-like_sf"/>
</dbReference>
<dbReference type="InterPro" id="IPR056792">
    <property type="entry name" value="PRC_RimM"/>
</dbReference>
<dbReference type="InterPro" id="IPR011961">
    <property type="entry name" value="RimM"/>
</dbReference>
<dbReference type="InterPro" id="IPR002676">
    <property type="entry name" value="RimM_N"/>
</dbReference>
<dbReference type="InterPro" id="IPR036976">
    <property type="entry name" value="RimM_N_sf"/>
</dbReference>
<dbReference type="InterPro" id="IPR009000">
    <property type="entry name" value="Transl_B-barrel_sf"/>
</dbReference>
<dbReference type="NCBIfam" id="TIGR02273">
    <property type="entry name" value="16S_RimM"/>
    <property type="match status" value="1"/>
</dbReference>
<dbReference type="PANTHER" id="PTHR33692">
    <property type="entry name" value="RIBOSOME MATURATION FACTOR RIMM"/>
    <property type="match status" value="1"/>
</dbReference>
<dbReference type="PANTHER" id="PTHR33692:SF1">
    <property type="entry name" value="RIBOSOME MATURATION FACTOR RIMM"/>
    <property type="match status" value="1"/>
</dbReference>
<dbReference type="Pfam" id="PF24986">
    <property type="entry name" value="PRC_RimM"/>
    <property type="match status" value="1"/>
</dbReference>
<dbReference type="Pfam" id="PF01782">
    <property type="entry name" value="RimM"/>
    <property type="match status" value="1"/>
</dbReference>
<dbReference type="SUPFAM" id="SSF50346">
    <property type="entry name" value="PRC-barrel domain"/>
    <property type="match status" value="1"/>
</dbReference>
<dbReference type="SUPFAM" id="SSF50447">
    <property type="entry name" value="Translation proteins"/>
    <property type="match status" value="1"/>
</dbReference>
<sequence>MSSAPNASALMKIGQLKKPYGIKGWLWVFSETDDRTAIFDIKPWWMKTATGMKPLTVKAWREQGTGIVAQFEQIPDRNVAETMNGVTLWVEQDILPEPAEDEYYWSDLVSLRVMNEQDEYLGDITEMFETGAHAIMRVAATTDSLDKEERLIPWHKQTVVKVDLTEKTVLVAWPSDY</sequence>
<proteinExistence type="inferred from homology"/>
<gene>
    <name evidence="1" type="primary">rimM</name>
    <name type="ordered locus">Pcryo_2321</name>
</gene>
<keyword id="KW-0143">Chaperone</keyword>
<keyword id="KW-0963">Cytoplasm</keyword>
<keyword id="KW-0690">Ribosome biogenesis</keyword>
<keyword id="KW-0698">rRNA processing</keyword>
<organism>
    <name type="scientific">Psychrobacter cryohalolentis (strain ATCC BAA-1226 / DSM 17306 / VKM B-2378 / K5)</name>
    <dbReference type="NCBI Taxonomy" id="335284"/>
    <lineage>
        <taxon>Bacteria</taxon>
        <taxon>Pseudomonadati</taxon>
        <taxon>Pseudomonadota</taxon>
        <taxon>Gammaproteobacteria</taxon>
        <taxon>Moraxellales</taxon>
        <taxon>Moraxellaceae</taxon>
        <taxon>Psychrobacter</taxon>
    </lineage>
</organism>
<feature type="chain" id="PRO_0000244153" description="Ribosome maturation factor RimM">
    <location>
        <begin position="1"/>
        <end position="177"/>
    </location>
</feature>
<feature type="domain" description="PRC barrel" evidence="1">
    <location>
        <begin position="100"/>
        <end position="177"/>
    </location>
</feature>